<reference key="1">
    <citation type="journal article" date="2007" name="PLoS ONE">
        <title>Analysis of the neurotoxin complex genes in Clostridium botulinum A1-A4 and B1 strains: BoNT/A3, /Ba4 and /B1 clusters are located within plasmids.</title>
        <authorList>
            <person name="Smith T.J."/>
            <person name="Hill K.K."/>
            <person name="Foley B.T."/>
            <person name="Detter J.C."/>
            <person name="Munk A.C."/>
            <person name="Bruce D.C."/>
            <person name="Doggett N.A."/>
            <person name="Smith L.A."/>
            <person name="Marks J.D."/>
            <person name="Xie G."/>
            <person name="Brettin T.S."/>
        </authorList>
    </citation>
    <scope>NUCLEOTIDE SEQUENCE [LARGE SCALE GENOMIC DNA]</scope>
    <source>
        <strain>Loch Maree / Type A3</strain>
    </source>
</reference>
<protein>
    <recommendedName>
        <fullName evidence="1">ATP synthase epsilon chain</fullName>
    </recommendedName>
    <alternativeName>
        <fullName evidence="1">ATP synthase F1 sector epsilon subunit</fullName>
    </alternativeName>
    <alternativeName>
        <fullName evidence="1">F-ATPase epsilon subunit</fullName>
    </alternativeName>
</protein>
<evidence type="ECO:0000255" key="1">
    <source>
        <dbReference type="HAMAP-Rule" id="MF_00530"/>
    </source>
</evidence>
<gene>
    <name evidence="1" type="primary">atpC</name>
    <name type="ordered locus">CLK_3332</name>
</gene>
<name>ATPE_CLOBM</name>
<feature type="chain" id="PRO_1000127840" description="ATP synthase epsilon chain">
    <location>
        <begin position="1"/>
        <end position="133"/>
    </location>
</feature>
<dbReference type="EMBL" id="CP000962">
    <property type="protein sequence ID" value="ACA53712.1"/>
    <property type="molecule type" value="Genomic_DNA"/>
</dbReference>
<dbReference type="RefSeq" id="WP_003356141.1">
    <property type="nucleotide sequence ID" value="NC_010520.1"/>
</dbReference>
<dbReference type="SMR" id="B1KSS9"/>
<dbReference type="KEGG" id="cbl:CLK_3332"/>
<dbReference type="HOGENOM" id="CLU_084338_1_1_9"/>
<dbReference type="GO" id="GO:0005886">
    <property type="term" value="C:plasma membrane"/>
    <property type="evidence" value="ECO:0007669"/>
    <property type="project" value="UniProtKB-SubCell"/>
</dbReference>
<dbReference type="GO" id="GO:0045259">
    <property type="term" value="C:proton-transporting ATP synthase complex"/>
    <property type="evidence" value="ECO:0007669"/>
    <property type="project" value="UniProtKB-KW"/>
</dbReference>
<dbReference type="GO" id="GO:0005524">
    <property type="term" value="F:ATP binding"/>
    <property type="evidence" value="ECO:0007669"/>
    <property type="project" value="UniProtKB-UniRule"/>
</dbReference>
<dbReference type="GO" id="GO:0046933">
    <property type="term" value="F:proton-transporting ATP synthase activity, rotational mechanism"/>
    <property type="evidence" value="ECO:0007669"/>
    <property type="project" value="UniProtKB-UniRule"/>
</dbReference>
<dbReference type="CDD" id="cd12152">
    <property type="entry name" value="F1-ATPase_delta"/>
    <property type="match status" value="1"/>
</dbReference>
<dbReference type="Gene3D" id="1.20.5.440">
    <property type="entry name" value="ATP synthase delta/epsilon subunit, C-terminal domain"/>
    <property type="match status" value="1"/>
</dbReference>
<dbReference type="Gene3D" id="2.60.15.10">
    <property type="entry name" value="F0F1 ATP synthase delta/epsilon subunit, N-terminal"/>
    <property type="match status" value="1"/>
</dbReference>
<dbReference type="HAMAP" id="MF_00530">
    <property type="entry name" value="ATP_synth_epsil_bac"/>
    <property type="match status" value="1"/>
</dbReference>
<dbReference type="InterPro" id="IPR036794">
    <property type="entry name" value="ATP_F1_dsu/esu_C_sf"/>
</dbReference>
<dbReference type="InterPro" id="IPR001469">
    <property type="entry name" value="ATP_synth_F1_dsu/esu"/>
</dbReference>
<dbReference type="InterPro" id="IPR020546">
    <property type="entry name" value="ATP_synth_F1_dsu/esu_N"/>
</dbReference>
<dbReference type="InterPro" id="IPR020547">
    <property type="entry name" value="ATP_synth_F1_esu_C"/>
</dbReference>
<dbReference type="InterPro" id="IPR036771">
    <property type="entry name" value="ATPsynth_dsu/esu_N"/>
</dbReference>
<dbReference type="NCBIfam" id="TIGR01216">
    <property type="entry name" value="ATP_synt_epsi"/>
    <property type="match status" value="1"/>
</dbReference>
<dbReference type="NCBIfam" id="NF009984">
    <property type="entry name" value="PRK13450.1"/>
    <property type="match status" value="1"/>
</dbReference>
<dbReference type="PANTHER" id="PTHR13822">
    <property type="entry name" value="ATP SYNTHASE DELTA/EPSILON CHAIN"/>
    <property type="match status" value="1"/>
</dbReference>
<dbReference type="PANTHER" id="PTHR13822:SF10">
    <property type="entry name" value="ATP SYNTHASE EPSILON CHAIN, CHLOROPLASTIC"/>
    <property type="match status" value="1"/>
</dbReference>
<dbReference type="Pfam" id="PF00401">
    <property type="entry name" value="ATP-synt_DE"/>
    <property type="match status" value="1"/>
</dbReference>
<dbReference type="Pfam" id="PF02823">
    <property type="entry name" value="ATP-synt_DE_N"/>
    <property type="match status" value="1"/>
</dbReference>
<dbReference type="SUPFAM" id="SSF46604">
    <property type="entry name" value="Epsilon subunit of F1F0-ATP synthase C-terminal domain"/>
    <property type="match status" value="1"/>
</dbReference>
<dbReference type="SUPFAM" id="SSF51344">
    <property type="entry name" value="Epsilon subunit of F1F0-ATP synthase N-terminal domain"/>
    <property type="match status" value="1"/>
</dbReference>
<accession>B1KSS9</accession>
<organism>
    <name type="scientific">Clostridium botulinum (strain Loch Maree / Type A3)</name>
    <dbReference type="NCBI Taxonomy" id="498214"/>
    <lineage>
        <taxon>Bacteria</taxon>
        <taxon>Bacillati</taxon>
        <taxon>Bacillota</taxon>
        <taxon>Clostridia</taxon>
        <taxon>Eubacteriales</taxon>
        <taxon>Clostridiaceae</taxon>
        <taxon>Clostridium</taxon>
    </lineage>
</organism>
<sequence>MKDNIELTIFTPEKNIKIGEIKEVITEGLDGDLAILPNHVNMITYLKPTITKYIDLNGNKNNIFTSSGVLKVEDNKVYIICDASEKPEDIDIKRAENAKKRAEERLRNKKEIDVKRAELALFRSIARIKIKEL</sequence>
<keyword id="KW-0066">ATP synthesis</keyword>
<keyword id="KW-1003">Cell membrane</keyword>
<keyword id="KW-0139">CF(1)</keyword>
<keyword id="KW-0375">Hydrogen ion transport</keyword>
<keyword id="KW-0406">Ion transport</keyword>
<keyword id="KW-0472">Membrane</keyword>
<keyword id="KW-0813">Transport</keyword>
<comment type="function">
    <text evidence="1">Produces ATP from ADP in the presence of a proton gradient across the membrane.</text>
</comment>
<comment type="subunit">
    <text evidence="1">F-type ATPases have 2 components, CF(1) - the catalytic core - and CF(0) - the membrane proton channel. CF(1) has five subunits: alpha(3), beta(3), gamma(1), delta(1), epsilon(1). CF(0) has three main subunits: a, b and c.</text>
</comment>
<comment type="subcellular location">
    <subcellularLocation>
        <location evidence="1">Cell membrane</location>
        <topology evidence="1">Peripheral membrane protein</topology>
    </subcellularLocation>
</comment>
<comment type="similarity">
    <text evidence="1">Belongs to the ATPase epsilon chain family.</text>
</comment>
<proteinExistence type="inferred from homology"/>